<gene>
    <name type="primary">repA</name>
</gene>
<evidence type="ECO:0007829" key="1">
    <source>
        <dbReference type="PDB" id="1G8Y"/>
    </source>
</evidence>
<evidence type="ECO:0007829" key="2">
    <source>
        <dbReference type="PDB" id="1NLF"/>
    </source>
</evidence>
<evidence type="ECO:0007829" key="3">
    <source>
        <dbReference type="PDB" id="1OLO"/>
    </source>
</evidence>
<name>REPJ_ECOLX</name>
<reference key="1">
    <citation type="journal article" date="1989" name="Gene">
        <title>Complete nucleotide sequence and gene organization of the broad-host-range plasmid RSF1010.</title>
        <authorList>
            <person name="Scholz P."/>
            <person name="Haring V."/>
            <person name="Wittmann-Liebold B."/>
            <person name="Ashman K."/>
            <person name="Bagdasarian M."/>
            <person name="Scherzinger E."/>
        </authorList>
    </citation>
    <scope>NUCLEOTIDE SEQUENCE [GENOMIC DNA]</scope>
</reference>
<sequence>MATHKPINILEAFAAAPPPLDYVLPNMVAGTVGALVSPGGAGKSMLALQLAAQIAGGPDLLEVGELPTGPVIYLPAEDPPTAIHHRLHALGAHLSAEERQAVADGLLIQPLIGSLPNIMAPEWFDGLKRAAEGRRLMVLDTLRRFHIEEENASGPMAQVIGRMEAIAADTGCSIVFLHHASKGAAMMGAGDQQQASRGSSVLVDNIRWQSYLSSMTSAEAEEWGVDDDQRRFFVRFGVSKANYGAPFADRWFRRHDGGVLKPAVLERQRKSKGVPRGEA</sequence>
<geneLocation type="plasmid">
    <name>IncQ RSF1010</name>
</geneLocation>
<dbReference type="EMBL" id="M28829">
    <property type="protein sequence ID" value="AAA26450.1"/>
    <property type="molecule type" value="Genomic_DNA"/>
</dbReference>
<dbReference type="PIR" id="JH0130">
    <property type="entry name" value="RGECRI"/>
</dbReference>
<dbReference type="RefSeq" id="NP_044309.1">
    <property type="nucleotide sequence ID" value="NC_001740.1"/>
</dbReference>
<dbReference type="RefSeq" id="WP_000190708.1">
    <property type="nucleotide sequence ID" value="NZ_WAJL01000044.1"/>
</dbReference>
<dbReference type="PDB" id="1G8Y">
    <property type="method" value="X-ray"/>
    <property type="resolution" value="2.40 A"/>
    <property type="chains" value="A/B/C/D/E/F/G/H/I/J/K/L=1-279"/>
</dbReference>
<dbReference type="PDB" id="1NLF">
    <property type="method" value="X-ray"/>
    <property type="resolution" value="1.95 A"/>
    <property type="chains" value="A/B/C=1-279"/>
</dbReference>
<dbReference type="PDB" id="1OLO">
    <property type="method" value="X-ray"/>
    <property type="resolution" value="2.55 A"/>
    <property type="chains" value="A/B=1-279"/>
</dbReference>
<dbReference type="PDBsum" id="1G8Y"/>
<dbReference type="PDBsum" id="1NLF"/>
<dbReference type="PDBsum" id="1OLO"/>
<dbReference type="SMR" id="P20356"/>
<dbReference type="DIP" id="DIP-59501N"/>
<dbReference type="IntAct" id="P20356">
    <property type="interactions" value="1"/>
</dbReference>
<dbReference type="BRENDA" id="3.6.4.12">
    <property type="organism ID" value="2026"/>
</dbReference>
<dbReference type="EvolutionaryTrace" id="P20356"/>
<dbReference type="GO" id="GO:0005524">
    <property type="term" value="F:ATP binding"/>
    <property type="evidence" value="ECO:0007669"/>
    <property type="project" value="UniProtKB-KW"/>
</dbReference>
<dbReference type="GO" id="GO:0006276">
    <property type="term" value="P:plasmid maintenance"/>
    <property type="evidence" value="ECO:0007669"/>
    <property type="project" value="UniProtKB-KW"/>
</dbReference>
<dbReference type="CDD" id="cd01125">
    <property type="entry name" value="RepA_RSF1010_like"/>
    <property type="match status" value="1"/>
</dbReference>
<dbReference type="Gene3D" id="3.40.50.300">
    <property type="entry name" value="P-loop containing nucleotide triphosphate hydrolases"/>
    <property type="match status" value="1"/>
</dbReference>
<dbReference type="InterPro" id="IPR027417">
    <property type="entry name" value="P-loop_NTPase"/>
</dbReference>
<dbReference type="InterPro" id="IPR038724">
    <property type="entry name" value="RepA"/>
</dbReference>
<dbReference type="Pfam" id="PF13481">
    <property type="entry name" value="AAA_25"/>
    <property type="match status" value="1"/>
</dbReference>
<dbReference type="SUPFAM" id="SSF52540">
    <property type="entry name" value="P-loop containing nucleoside triphosphate hydrolases"/>
    <property type="match status" value="1"/>
</dbReference>
<keyword id="KW-0002">3D-structure</keyword>
<keyword id="KW-0067">ATP-binding</keyword>
<keyword id="KW-0547">Nucleotide-binding</keyword>
<keyword id="KW-0614">Plasmid</keyword>
<keyword id="KW-0615">Plasmid copy control</keyword>
<feature type="chain" id="PRO_0000068333" description="Regulatory protein RepA">
    <location>
        <begin position="1"/>
        <end position="279"/>
    </location>
</feature>
<feature type="helix" evidence="2">
    <location>
        <begin position="9"/>
        <end position="14"/>
    </location>
</feature>
<feature type="strand" evidence="2">
    <location>
        <begin position="22"/>
        <end position="24"/>
    </location>
</feature>
<feature type="strand" evidence="2">
    <location>
        <begin position="31"/>
        <end position="38"/>
    </location>
</feature>
<feature type="helix" evidence="2">
    <location>
        <begin position="43"/>
        <end position="55"/>
    </location>
</feature>
<feature type="strand" evidence="2">
    <location>
        <begin position="71"/>
        <end position="78"/>
    </location>
</feature>
<feature type="helix" evidence="2">
    <location>
        <begin position="80"/>
        <end position="91"/>
    </location>
</feature>
<feature type="helix" evidence="2">
    <location>
        <begin position="96"/>
        <end position="105"/>
    </location>
</feature>
<feature type="strand" evidence="2">
    <location>
        <begin position="106"/>
        <end position="108"/>
    </location>
</feature>
<feature type="turn" evidence="3">
    <location>
        <begin position="112"/>
        <end position="114"/>
    </location>
</feature>
<feature type="helix" evidence="2">
    <location>
        <begin position="121"/>
        <end position="131"/>
    </location>
</feature>
<feature type="strand" evidence="2">
    <location>
        <begin position="135"/>
        <end position="140"/>
    </location>
</feature>
<feature type="helix" evidence="2">
    <location>
        <begin position="142"/>
        <end position="145"/>
    </location>
</feature>
<feature type="helix" evidence="2">
    <location>
        <begin position="153"/>
        <end position="170"/>
    </location>
</feature>
<feature type="strand" evidence="2">
    <location>
        <begin position="173"/>
        <end position="179"/>
    </location>
</feature>
<feature type="helix" evidence="2">
    <location>
        <begin position="203"/>
        <end position="205"/>
    </location>
</feature>
<feature type="strand" evidence="2">
    <location>
        <begin position="209"/>
        <end position="214"/>
    </location>
</feature>
<feature type="helix" evidence="2">
    <location>
        <begin position="217"/>
        <end position="222"/>
    </location>
</feature>
<feature type="strand" evidence="1">
    <location>
        <begin position="227"/>
        <end position="229"/>
    </location>
</feature>
<feature type="helix" evidence="2">
    <location>
        <begin position="230"/>
        <end position="232"/>
    </location>
</feature>
<feature type="strand" evidence="2">
    <location>
        <begin position="233"/>
        <end position="240"/>
    </location>
</feature>
<feature type="strand" evidence="2">
    <location>
        <begin position="242"/>
        <end position="245"/>
    </location>
</feature>
<feature type="strand" evidence="2">
    <location>
        <begin position="250"/>
        <end position="254"/>
    </location>
</feature>
<feature type="helix" evidence="2">
    <location>
        <begin position="256"/>
        <end position="258"/>
    </location>
</feature>
<feature type="strand" evidence="2">
    <location>
        <begin position="260"/>
        <end position="262"/>
    </location>
</feature>
<organism>
    <name type="scientific">Escherichia coli</name>
    <dbReference type="NCBI Taxonomy" id="562"/>
    <lineage>
        <taxon>Bacteria</taxon>
        <taxon>Pseudomonadati</taxon>
        <taxon>Pseudomonadota</taxon>
        <taxon>Gammaproteobacteria</taxon>
        <taxon>Enterobacterales</taxon>
        <taxon>Enterobacteriaceae</taxon>
        <taxon>Escherichia</taxon>
    </lineage>
</organism>
<proteinExistence type="evidence at protein level"/>
<protein>
    <recommendedName>
        <fullName>Regulatory protein RepA</fullName>
    </recommendedName>
</protein>
<comment type="function">
    <text>This protein is involved in regulating the plasmid copy-number. Increasing the level of this protein results in a higher plasmid copy-number.</text>
</comment>
<accession>P20356</accession>